<evidence type="ECO:0000255" key="1">
    <source>
        <dbReference type="HAMAP-Rule" id="MF_01309"/>
    </source>
</evidence>
<evidence type="ECO:0000256" key="2">
    <source>
        <dbReference type="SAM" id="MobiDB-lite"/>
    </source>
</evidence>
<evidence type="ECO:0000305" key="3"/>
<keyword id="KW-1185">Reference proteome</keyword>
<keyword id="KW-0687">Ribonucleoprotein</keyword>
<keyword id="KW-0689">Ribosomal protein</keyword>
<keyword id="KW-0694">RNA-binding</keyword>
<keyword id="KW-0699">rRNA-binding</keyword>
<name>RS3_NOCFA</name>
<dbReference type="EMBL" id="AP006618">
    <property type="protein sequence ID" value="BAD55584.1"/>
    <property type="molecule type" value="Genomic_DNA"/>
</dbReference>
<dbReference type="RefSeq" id="WP_011207270.1">
    <property type="nucleotide sequence ID" value="NC_006361.1"/>
</dbReference>
<dbReference type="SMR" id="Q5Z1V7"/>
<dbReference type="STRING" id="247156.NFA_7390"/>
<dbReference type="GeneID" id="61131570"/>
<dbReference type="KEGG" id="nfa:NFA_7390"/>
<dbReference type="eggNOG" id="COG0092">
    <property type="taxonomic scope" value="Bacteria"/>
</dbReference>
<dbReference type="HOGENOM" id="CLU_058591_0_0_11"/>
<dbReference type="OrthoDB" id="9806396at2"/>
<dbReference type="Proteomes" id="UP000006820">
    <property type="component" value="Chromosome"/>
</dbReference>
<dbReference type="GO" id="GO:0022627">
    <property type="term" value="C:cytosolic small ribosomal subunit"/>
    <property type="evidence" value="ECO:0007669"/>
    <property type="project" value="TreeGrafter"/>
</dbReference>
<dbReference type="GO" id="GO:0003729">
    <property type="term" value="F:mRNA binding"/>
    <property type="evidence" value="ECO:0007669"/>
    <property type="project" value="UniProtKB-UniRule"/>
</dbReference>
<dbReference type="GO" id="GO:0019843">
    <property type="term" value="F:rRNA binding"/>
    <property type="evidence" value="ECO:0007669"/>
    <property type="project" value="UniProtKB-UniRule"/>
</dbReference>
<dbReference type="GO" id="GO:0003735">
    <property type="term" value="F:structural constituent of ribosome"/>
    <property type="evidence" value="ECO:0007669"/>
    <property type="project" value="InterPro"/>
</dbReference>
<dbReference type="GO" id="GO:0006412">
    <property type="term" value="P:translation"/>
    <property type="evidence" value="ECO:0007669"/>
    <property type="project" value="UniProtKB-UniRule"/>
</dbReference>
<dbReference type="CDD" id="cd02412">
    <property type="entry name" value="KH-II_30S_S3"/>
    <property type="match status" value="1"/>
</dbReference>
<dbReference type="FunFam" id="3.30.1140.32:FF:000002">
    <property type="entry name" value="30S ribosomal protein S3"/>
    <property type="match status" value="1"/>
</dbReference>
<dbReference type="FunFam" id="3.30.300.20:FF:000001">
    <property type="entry name" value="30S ribosomal protein S3"/>
    <property type="match status" value="1"/>
</dbReference>
<dbReference type="Gene3D" id="3.30.300.20">
    <property type="match status" value="1"/>
</dbReference>
<dbReference type="Gene3D" id="3.30.1140.32">
    <property type="entry name" value="Ribosomal protein S3, C-terminal domain"/>
    <property type="match status" value="1"/>
</dbReference>
<dbReference type="HAMAP" id="MF_01309_B">
    <property type="entry name" value="Ribosomal_uS3_B"/>
    <property type="match status" value="1"/>
</dbReference>
<dbReference type="InterPro" id="IPR004087">
    <property type="entry name" value="KH_dom"/>
</dbReference>
<dbReference type="InterPro" id="IPR015946">
    <property type="entry name" value="KH_dom-like_a/b"/>
</dbReference>
<dbReference type="InterPro" id="IPR004044">
    <property type="entry name" value="KH_dom_type_2"/>
</dbReference>
<dbReference type="InterPro" id="IPR009019">
    <property type="entry name" value="KH_sf_prok-type"/>
</dbReference>
<dbReference type="InterPro" id="IPR036419">
    <property type="entry name" value="Ribosomal_S3_C_sf"/>
</dbReference>
<dbReference type="InterPro" id="IPR005704">
    <property type="entry name" value="Ribosomal_uS3_bac-typ"/>
</dbReference>
<dbReference type="InterPro" id="IPR001351">
    <property type="entry name" value="Ribosomal_uS3_C"/>
</dbReference>
<dbReference type="InterPro" id="IPR018280">
    <property type="entry name" value="Ribosomal_uS3_CS"/>
</dbReference>
<dbReference type="NCBIfam" id="TIGR01009">
    <property type="entry name" value="rpsC_bact"/>
    <property type="match status" value="1"/>
</dbReference>
<dbReference type="PANTHER" id="PTHR11760">
    <property type="entry name" value="30S/40S RIBOSOMAL PROTEIN S3"/>
    <property type="match status" value="1"/>
</dbReference>
<dbReference type="PANTHER" id="PTHR11760:SF19">
    <property type="entry name" value="SMALL RIBOSOMAL SUBUNIT PROTEIN US3C"/>
    <property type="match status" value="1"/>
</dbReference>
<dbReference type="Pfam" id="PF07650">
    <property type="entry name" value="KH_2"/>
    <property type="match status" value="1"/>
</dbReference>
<dbReference type="Pfam" id="PF00189">
    <property type="entry name" value="Ribosomal_S3_C"/>
    <property type="match status" value="1"/>
</dbReference>
<dbReference type="SMART" id="SM00322">
    <property type="entry name" value="KH"/>
    <property type="match status" value="1"/>
</dbReference>
<dbReference type="SUPFAM" id="SSF54814">
    <property type="entry name" value="Prokaryotic type KH domain (KH-domain type II)"/>
    <property type="match status" value="1"/>
</dbReference>
<dbReference type="SUPFAM" id="SSF54821">
    <property type="entry name" value="Ribosomal protein S3 C-terminal domain"/>
    <property type="match status" value="1"/>
</dbReference>
<dbReference type="PROSITE" id="PS50823">
    <property type="entry name" value="KH_TYPE_2"/>
    <property type="match status" value="1"/>
</dbReference>
<dbReference type="PROSITE" id="PS00548">
    <property type="entry name" value="RIBOSOMAL_S3"/>
    <property type="match status" value="1"/>
</dbReference>
<sequence>MGQKINPHGFRLGITTDWKSRWYADKQYADYVKEDVAIRKLLATGMERAGISKVEIERTRDRVRVDIHTARPGIVIGRRGAEADRIRAELEKLTGKQVQLNILEVKNPESDAQLVAQGVAEQLSNRVAFRRAMRKAIQSAMRSPNVKGIRVQCSGRLGGAEMSRSEFYREGRVPLHTLRADIDYGLYEAKTTFGRIGVKVWIYKGDIVGGKRELTAASAPAGDRDRPRRERPSRPRRSGSTGTTATSTEAGRAATAVVEAPAENQEG</sequence>
<comment type="function">
    <text evidence="1">Binds the lower part of the 30S subunit head. Binds mRNA in the 70S ribosome, positioning it for translation.</text>
</comment>
<comment type="subunit">
    <text evidence="1">Part of the 30S ribosomal subunit. Forms a tight complex with proteins S10 and S14.</text>
</comment>
<comment type="similarity">
    <text evidence="1">Belongs to the universal ribosomal protein uS3 family.</text>
</comment>
<protein>
    <recommendedName>
        <fullName evidence="1">Small ribosomal subunit protein uS3</fullName>
    </recommendedName>
    <alternativeName>
        <fullName evidence="3">30S ribosomal protein S3</fullName>
    </alternativeName>
</protein>
<accession>Q5Z1V7</accession>
<feature type="chain" id="PRO_0000130163" description="Small ribosomal subunit protein uS3">
    <location>
        <begin position="1"/>
        <end position="267"/>
    </location>
</feature>
<feature type="domain" description="KH type-2" evidence="1">
    <location>
        <begin position="38"/>
        <end position="106"/>
    </location>
</feature>
<feature type="region of interest" description="Disordered" evidence="2">
    <location>
        <begin position="215"/>
        <end position="267"/>
    </location>
</feature>
<feature type="compositionally biased region" description="Basic and acidic residues" evidence="2">
    <location>
        <begin position="222"/>
        <end position="233"/>
    </location>
</feature>
<feature type="compositionally biased region" description="Low complexity" evidence="2">
    <location>
        <begin position="238"/>
        <end position="256"/>
    </location>
</feature>
<proteinExistence type="inferred from homology"/>
<reference key="1">
    <citation type="journal article" date="2004" name="Proc. Natl. Acad. Sci. U.S.A.">
        <title>The complete genomic sequence of Nocardia farcinica IFM 10152.</title>
        <authorList>
            <person name="Ishikawa J."/>
            <person name="Yamashita A."/>
            <person name="Mikami Y."/>
            <person name="Hoshino Y."/>
            <person name="Kurita H."/>
            <person name="Hotta K."/>
            <person name="Shiba T."/>
            <person name="Hattori M."/>
        </authorList>
    </citation>
    <scope>NUCLEOTIDE SEQUENCE [LARGE SCALE GENOMIC DNA]</scope>
    <source>
        <strain>IFM 10152</strain>
    </source>
</reference>
<gene>
    <name evidence="1" type="primary">rpsC</name>
    <name type="ordered locus">NFA_7390</name>
</gene>
<organism>
    <name type="scientific">Nocardia farcinica (strain IFM 10152)</name>
    <dbReference type="NCBI Taxonomy" id="247156"/>
    <lineage>
        <taxon>Bacteria</taxon>
        <taxon>Bacillati</taxon>
        <taxon>Actinomycetota</taxon>
        <taxon>Actinomycetes</taxon>
        <taxon>Mycobacteriales</taxon>
        <taxon>Nocardiaceae</taxon>
        <taxon>Nocardia</taxon>
    </lineage>
</organism>